<evidence type="ECO:0000256" key="1">
    <source>
        <dbReference type="SAM" id="MobiDB-lite"/>
    </source>
</evidence>
<evidence type="ECO:0000269" key="2">
    <source>
    </source>
</evidence>
<evidence type="ECO:0000269" key="3">
    <source>
    </source>
</evidence>
<evidence type="ECO:0000269" key="4">
    <source>
    </source>
</evidence>
<evidence type="ECO:0000269" key="5">
    <source>
    </source>
</evidence>
<evidence type="ECO:0000269" key="6">
    <source>
    </source>
</evidence>
<evidence type="ECO:0000269" key="7">
    <source>
    </source>
</evidence>
<evidence type="ECO:0000269" key="8">
    <source>
    </source>
</evidence>
<evidence type="ECO:0000269" key="9">
    <source>
    </source>
</evidence>
<evidence type="ECO:0000269" key="10">
    <source>
    </source>
</evidence>
<evidence type="ECO:0000269" key="11">
    <source>
    </source>
</evidence>
<evidence type="ECO:0000269" key="12">
    <source>
    </source>
</evidence>
<evidence type="ECO:0000269" key="13">
    <source>
    </source>
</evidence>
<evidence type="ECO:0000269" key="14">
    <source>
    </source>
</evidence>
<evidence type="ECO:0000269" key="15">
    <source>
    </source>
</evidence>
<evidence type="ECO:0000269" key="16">
    <source>
    </source>
</evidence>
<evidence type="ECO:0000269" key="17">
    <source>
    </source>
</evidence>
<evidence type="ECO:0000269" key="18">
    <source>
    </source>
</evidence>
<evidence type="ECO:0000269" key="19">
    <source>
    </source>
</evidence>
<evidence type="ECO:0000269" key="20">
    <source>
    </source>
</evidence>
<evidence type="ECO:0000269" key="21">
    <source>
    </source>
</evidence>
<evidence type="ECO:0000269" key="22">
    <source>
    </source>
</evidence>
<evidence type="ECO:0000269" key="23">
    <source>
    </source>
</evidence>
<evidence type="ECO:0000269" key="24">
    <source>
    </source>
</evidence>
<evidence type="ECO:0000269" key="25">
    <source>
    </source>
</evidence>
<evidence type="ECO:0000269" key="26">
    <source>
    </source>
</evidence>
<evidence type="ECO:0000269" key="27">
    <source>
    </source>
</evidence>
<evidence type="ECO:0000269" key="28">
    <source>
    </source>
</evidence>
<evidence type="ECO:0000269" key="29">
    <source>
    </source>
</evidence>
<evidence type="ECO:0000269" key="30">
    <source>
    </source>
</evidence>
<evidence type="ECO:0000269" key="31">
    <source>
    </source>
</evidence>
<evidence type="ECO:0000269" key="32">
    <source>
    </source>
</evidence>
<evidence type="ECO:0000269" key="33">
    <source>
    </source>
</evidence>
<evidence type="ECO:0000269" key="34">
    <source>
    </source>
</evidence>
<evidence type="ECO:0000269" key="35">
    <source>
    </source>
</evidence>
<evidence type="ECO:0000269" key="36">
    <source>
    </source>
</evidence>
<evidence type="ECO:0000269" key="37">
    <source>
    </source>
</evidence>
<evidence type="ECO:0000269" key="38">
    <source>
    </source>
</evidence>
<evidence type="ECO:0000269" key="39">
    <source>
    </source>
</evidence>
<evidence type="ECO:0000269" key="40">
    <source>
    </source>
</evidence>
<evidence type="ECO:0000269" key="41">
    <source>
    </source>
</evidence>
<evidence type="ECO:0000269" key="42">
    <source>
    </source>
</evidence>
<evidence type="ECO:0000269" key="43">
    <source>
    </source>
</evidence>
<evidence type="ECO:0000269" key="44">
    <source>
    </source>
</evidence>
<evidence type="ECO:0000269" key="45">
    <source>
    </source>
</evidence>
<evidence type="ECO:0000269" key="46">
    <source>
    </source>
</evidence>
<evidence type="ECO:0000269" key="47">
    <source>
    </source>
</evidence>
<evidence type="ECO:0000269" key="48">
    <source>
    </source>
</evidence>
<evidence type="ECO:0000269" key="49">
    <source>
    </source>
</evidence>
<evidence type="ECO:0000269" key="50">
    <source>
    </source>
</evidence>
<evidence type="ECO:0000269" key="51">
    <source>
    </source>
</evidence>
<evidence type="ECO:0000269" key="52">
    <source>
    </source>
</evidence>
<evidence type="ECO:0000269" key="53">
    <source>
    </source>
</evidence>
<evidence type="ECO:0000269" key="54">
    <source>
    </source>
</evidence>
<evidence type="ECO:0000269" key="55">
    <source>
    </source>
</evidence>
<evidence type="ECO:0000305" key="56"/>
<evidence type="ECO:0000305" key="57">
    <source>
    </source>
</evidence>
<evidence type="ECO:0000305" key="58">
    <source>
    </source>
</evidence>
<evidence type="ECO:0007744" key="59">
    <source>
        <dbReference type="PDB" id="1PJD"/>
    </source>
</evidence>
<evidence type="ECO:0007744" key="60">
    <source>
        <dbReference type="PDB" id="2K9P"/>
    </source>
</evidence>
<evidence type="ECO:0007744" key="61">
    <source>
        <dbReference type="PDB" id="7AD3"/>
    </source>
</evidence>
<evidence type="ECO:0007744" key="62">
    <source>
        <dbReference type="PDB" id="7QA8"/>
    </source>
</evidence>
<evidence type="ECO:0007744" key="63">
    <source>
        <dbReference type="PDB" id="7QB9"/>
    </source>
</evidence>
<evidence type="ECO:0007744" key="64">
    <source>
        <dbReference type="PDB" id="7QBC"/>
    </source>
</evidence>
<evidence type="ECO:0007744" key="65">
    <source>
        <dbReference type="PDB" id="7QBI"/>
    </source>
</evidence>
<evidence type="ECO:0007744" key="66">
    <source>
    </source>
</evidence>
<evidence type="ECO:0007744" key="67">
    <source>
    </source>
</evidence>
<evidence type="ECO:0007744" key="68">
    <source>
    </source>
</evidence>
<evidence type="ECO:0007744" key="69">
    <source>
    </source>
</evidence>
<evidence type="ECO:0007829" key="70">
    <source>
        <dbReference type="PDB" id="7QA8"/>
    </source>
</evidence>
<evidence type="ECO:0007829" key="71">
    <source>
        <dbReference type="PDB" id="7QB9"/>
    </source>
</evidence>
<evidence type="ECO:0007829" key="72">
    <source>
        <dbReference type="PDB" id="7QBI"/>
    </source>
</evidence>
<proteinExistence type="evidence at protein level"/>
<sequence length="431" mass="47849">MSDAAPSLSNLFYDPTYNPGQSTINYTSIYGNGSTITFDELQGLVNSTVTQAIMFGVRCGAAALTLIVMWMTSRSRKTPIFIINQVSLFLIILHSALYFKYLLSNYSSVTYALTGFPQFISRGDVHVYGATNIIQVLLVASIETSLVFQIKVIFTGDNFKRIGLMLTSISFTLGIATVTMYFVSAVKGMIVTYNDVSATQDKYFNASTILLASSINFMSFVLVVKLILAIRSRRFLGLKQFDSFHILLIMSCQSLLVPSIIFILAYSLKPNQGTDVLTTVATLLAVLSLPLSSMWATAANNASKTNTITSDFTTSTDRFYPGTLSSFQTDSINNDAKSSLRSRLYDLYPRRKETTSDKHSERTFVSETADDIEKNQFYQLPTPTSSKNTRIGPFADASYKEGEVEPVDMYTPDTAADEEARKFWTEDNNNL</sequence>
<feature type="chain" id="PRO_0000195068" description="Pheromone alpha factor receptor">
    <location>
        <begin position="1"/>
        <end position="431"/>
    </location>
</feature>
<feature type="topological domain" description="Extracellular" evidence="57 58">
    <location>
        <begin position="1"/>
        <end position="49"/>
    </location>
</feature>
<feature type="transmembrane region" description="Helical; Name=1" evidence="5 7 24 60">
    <location>
        <begin position="50"/>
        <end position="72"/>
    </location>
</feature>
<feature type="topological domain" description="Cytoplasmic" evidence="57 58">
    <location>
        <begin position="73"/>
        <end position="78"/>
    </location>
</feature>
<feature type="transmembrane region" description="Helical; Name=2" evidence="5 7 24 60">
    <location>
        <begin position="79"/>
        <end position="102"/>
    </location>
</feature>
<feature type="topological domain" description="Extracellular" evidence="57 58">
    <location>
        <begin position="103"/>
        <end position="132"/>
    </location>
</feature>
<feature type="transmembrane region" description="Helical; Name=3" evidence="5 7">
    <location>
        <begin position="133"/>
        <end position="156"/>
    </location>
</feature>
<feature type="topological domain" description="Cytoplasmic" evidence="57 58">
    <location>
        <begin position="157"/>
        <end position="163"/>
    </location>
</feature>
<feature type="transmembrane region" description="Helical; Name=4" evidence="5 7">
    <location>
        <begin position="164"/>
        <end position="188"/>
    </location>
</feature>
<feature type="topological domain" description="Extracellular" evidence="57 58">
    <location>
        <begin position="189"/>
        <end position="205"/>
    </location>
</feature>
<feature type="transmembrane region" description="Helical; Name=5" evidence="5 7">
    <location>
        <begin position="206"/>
        <end position="230"/>
    </location>
</feature>
<feature type="topological domain" description="Cytoplasmic" evidence="57 58">
    <location>
        <begin position="231"/>
        <end position="241"/>
    </location>
</feature>
<feature type="transmembrane region" description="Helical; Name=6" evidence="5 7 8 59">
    <location>
        <begin position="242"/>
        <end position="266"/>
    </location>
</feature>
<feature type="topological domain" description="Extracellular" evidence="57 58">
    <location>
        <begin position="267"/>
        <end position="275"/>
    </location>
</feature>
<feature type="transmembrane region" description="Helical; Name=7" evidence="5 7">
    <location>
        <begin position="276"/>
        <end position="299"/>
    </location>
</feature>
<feature type="topological domain" description="Cytoplasmic" evidence="57 58">
    <location>
        <begin position="300"/>
        <end position="431"/>
    </location>
</feature>
<feature type="region of interest" description="Disordered" evidence="1">
    <location>
        <begin position="379"/>
        <end position="406"/>
    </location>
</feature>
<feature type="short sequence motif" description="Glycine zipper motif" evidence="17 36">
    <location>
        <begin position="53"/>
        <end position="61"/>
    </location>
</feature>
<feature type="compositionally biased region" description="Polar residues" evidence="1">
    <location>
        <begin position="379"/>
        <end position="389"/>
    </location>
</feature>
<feature type="modified residue" description="Phosphoserine" evidence="67">
    <location>
        <position position="310"/>
    </location>
</feature>
<feature type="modified residue" description="Phosphoserine" evidence="68">
    <location>
        <position position="315"/>
    </location>
</feature>
<feature type="modified residue" description="Phosphothreonine" evidence="67 68">
    <location>
        <position position="329"/>
    </location>
</feature>
<feature type="modified residue" description="Phosphoserine" evidence="67 68">
    <location>
        <position position="331"/>
    </location>
</feature>
<feature type="modified residue" description="Phosphoserine" evidence="67">
    <location>
        <position position="360"/>
    </location>
</feature>
<feature type="modified residue" description="Phosphothreonine" evidence="67">
    <location>
        <position position="363"/>
    </location>
</feature>
<feature type="modified residue" description="Phosphoserine" evidence="66 67 68">
    <location>
        <position position="366"/>
    </location>
</feature>
<feature type="modified residue" description="Phosphothreonine" evidence="67 68">
    <location>
        <position position="382"/>
    </location>
</feature>
<feature type="modified residue" description="Phosphoserine" evidence="67">
    <location>
        <position position="385"/>
    </location>
</feature>
<feature type="modified residue" description="Phosphoserine" evidence="67 68">
    <location>
        <position position="386"/>
    </location>
</feature>
<feature type="modified residue" description="Phosphothreonine" evidence="67">
    <location>
        <position position="411"/>
    </location>
</feature>
<feature type="modified residue" description="Phosphothreonine" evidence="67">
    <location>
        <position position="414"/>
    </location>
</feature>
<feature type="glycosylation site" description="N-linked (GlcNAc...) asparagine" evidence="10">
    <location>
        <position position="25"/>
    </location>
</feature>
<feature type="glycosylation site" description="N-linked (GlcNAc...) asparagine" evidence="10">
    <location>
        <position position="32"/>
    </location>
</feature>
<feature type="cross-link" description="Glycyl lysine isopeptide (Lys-Gly) (interchain with G-Cter in ubiquitin)" evidence="52">
    <location>
        <position position="337"/>
    </location>
</feature>
<feature type="cross-link" description="Glycyl lysine isopeptide (Lys-Gly) (interchain with G-Cter in ubiquitin)" evidence="69">
    <location>
        <position position="374"/>
    </location>
</feature>
<feature type="cross-link" description="Glycyl lysine isopeptide (Lys-Gly) (interchain with G-Cter in ubiquitin)" evidence="69">
    <location>
        <position position="400"/>
    </location>
</feature>
<feature type="cross-link" description="Glycyl lysine isopeptide (Lys-Gly) (interchain with G-Cter in ubiquitin)" evidence="69">
    <location>
        <position position="422"/>
    </location>
</feature>
<feature type="mutagenesis site" description="Strongly decreases the binding of alpha-factor; when associated with E-48." evidence="9">
    <original>S</original>
    <variation>E</variation>
    <location>
        <position position="47"/>
    </location>
</feature>
<feature type="mutagenesis site" description="Strongly decreases the binding of alpha-factor; when associated with E-478." evidence="9">
    <original>T</original>
    <variation>E</variation>
    <location>
        <position position="48"/>
    </location>
</feature>
<feature type="mutagenesis site" description="Decreases the binding of alpha-factor." evidence="55">
    <original>F</original>
    <variation>V</variation>
    <location>
        <position position="55"/>
    </location>
</feature>
<feature type="mutagenesis site" description="Substantially reduces dimerization and signaling without affecting agonist binding." evidence="17 23">
    <original>G</original>
    <variation>A</variation>
    <location>
        <position position="56"/>
    </location>
</feature>
<feature type="mutagenesis site" description="Substantially reduces dimerization and signaling without affecting agonist binding." evidence="17 23">
    <original>G</original>
    <variation>A</variation>
    <location>
        <position position="60"/>
    </location>
</feature>
<feature type="mutagenesis site" description="Dominant negative mutation that inhibits the response to mating pheromone in cells that also express wild-type receptors." evidence="53">
    <original>N</original>
    <variation>Y</variation>
    <location>
        <position position="132"/>
    </location>
</feature>
<feature type="mutagenesis site" description="Abrogates both ligand binding and signaling." evidence="19">
    <original>F</original>
    <variation>A</variation>
    <location>
        <position position="204"/>
    </location>
</feature>
<feature type="mutagenesis site" description="Abrogates both ligand binding and signaling." evidence="19">
    <original>N</original>
    <variation>A</variation>
    <location>
        <position position="205"/>
    </location>
</feature>
<feature type="mutagenesis site" description="Dominant negative mutation that inhibits the response to mating pheromone in cells that also express wild-type receptors." evidence="53">
    <original>S</original>
    <variation>F</variation>
    <location>
        <position position="207"/>
    </location>
</feature>
<feature type="mutagenesis site" description="Decreases the binding of alpha-factor." evidence="55">
    <original>S</original>
    <variation>P</variation>
    <location>
        <position position="219"/>
    </location>
</feature>
<feature type="mutagenesis site" description="Leads to reduced mating ability; when associated with A-241." evidence="45">
    <original>R</original>
    <variation>A</variation>
    <location>
        <position position="233"/>
    </location>
</feature>
<feature type="mutagenesis site" description="Disrupts the interaction with G-protein complex and reduces cell responsiveness to alpha-factor; when associated with G-234." evidence="46">
    <original>R</original>
    <variation>S</variation>
    <location>
        <position position="233"/>
    </location>
</feature>
<feature type="mutagenesis site" description="Disrupts the interaction with G-protein complex and reduces cell responsiveness to alpha-factor; when associated with S-233." evidence="46">
    <original>R</original>
    <variation>G</variation>
    <location>
        <position position="234"/>
    </location>
</feature>
<feature type="mutagenesis site" description="Disrupts the interaction with G-protein complex and reduces cell responsiveness to alpha-factor." evidence="46">
    <original>L</original>
    <variation>H</variation>
    <variation>R</variation>
    <location>
        <position position="236"/>
    </location>
</feature>
<feature type="mutagenesis site" description="Causes a weak constitutive activation of the mating pathway." evidence="45">
    <original>G</original>
    <variation>A</variation>
    <location>
        <position position="237"/>
    </location>
</feature>
<feature type="mutagenesis site" description="Causes a weak constitutive activation of the mating pathway." evidence="45">
    <original>Q</original>
    <variation>A</variation>
    <location>
        <position position="240"/>
    </location>
</feature>
<feature type="mutagenesis site" description="Causes a weak constitutive activation of the mating pathway. Leads to reduced mating ability; when associated with A-2331." evidence="45">
    <original>F</original>
    <variation>A</variation>
    <location>
        <position position="241"/>
    </location>
</feature>
<feature type="mutagenesis site" description="Results in 25-fold increased affinity and a 5-fold-higher basal level of signaling." evidence="54">
    <original>Q</original>
    <variation>L</variation>
    <location>
        <position position="253"/>
    </location>
</feature>
<feature type="mutagenesis site" description="Results in 5-fold increased affinity and a weak constitutive activity." evidence="54">
    <original>S</original>
    <variation>L</variation>
    <location>
        <position position="254"/>
    </location>
</feature>
<feature type="mutagenesis site" description="Causes constitutive activation of the mating pathway." evidence="49 51">
    <original>P</original>
    <variation>L</variation>
    <location>
        <position position="258"/>
    </location>
</feature>
<feature type="mutagenesis site" description="Causes constitutive activation of the mating pathway." evidence="49">
    <original>S</original>
    <variation>L</variation>
    <location>
        <position position="259"/>
    </location>
</feature>
<feature type="mutagenesis site" description="Impairs signal transduction." evidence="13">
    <original>Y</original>
    <variation>A</variation>
    <variation>S</variation>
    <variation>L</variation>
    <variation>K</variation>
    <location>
        <position position="266"/>
    </location>
</feature>
<feature type="mutagenesis site" description="Dominant negative mutation that inhibits the response to mating pheromone in cells that also express wild-type receptors." evidence="53">
    <original>Y</original>
    <variation>C</variation>
    <location>
        <position position="266"/>
    </location>
</feature>
<feature type="mutagenesis site" description="Dominant negative mutation that inhibits the response to mating pheromone in cells that also express wild-type receptors." evidence="53">
    <original>T</original>
    <variation>A</variation>
    <location>
        <position position="274"/>
    </location>
</feature>
<feature type="mutagenesis site" description="Impairs internalization in response to alpha-factor-binding." evidence="47">
    <original>D</original>
    <variation>A</variation>
    <variation>R</variation>
    <location>
        <position position="335"/>
    </location>
</feature>
<feature type="mutagenesis site" description="Impairs internalization in response to alpha-factor-binding." evidence="47">
    <original>K</original>
    <variation>A</variation>
    <variation>R</variation>
    <location>
        <position position="337"/>
    </location>
</feature>
<feature type="mutagenesis site" description="Impairs internalization in response to alpha-factor-binding." evidence="47">
    <original>SS</original>
    <variation>AA</variation>
    <location>
        <begin position="338"/>
        <end position="339"/>
    </location>
</feature>
<feature type="sequence conflict" description="In Ref. 4; BAA09212." evidence="56" ref="4">
    <original>K</original>
    <variation>E</variation>
    <location>
        <position position="269"/>
    </location>
</feature>
<feature type="helix" evidence="70">
    <location>
        <begin position="10"/>
        <end position="13"/>
    </location>
</feature>
<feature type="strand" evidence="70">
    <location>
        <begin position="21"/>
        <end position="28"/>
    </location>
</feature>
<feature type="strand" evidence="70">
    <location>
        <begin position="31"/>
        <end position="37"/>
    </location>
</feature>
<feature type="helix" evidence="70">
    <location>
        <begin position="38"/>
        <end position="71"/>
    </location>
</feature>
<feature type="helix" evidence="70">
    <location>
        <begin position="79"/>
        <end position="102"/>
    </location>
</feature>
<feature type="strand" evidence="71">
    <location>
        <begin position="104"/>
        <end position="108"/>
    </location>
</feature>
<feature type="helix" evidence="70">
    <location>
        <begin position="109"/>
        <end position="113"/>
    </location>
</feature>
<feature type="helix" evidence="70">
    <location>
        <begin position="117"/>
        <end position="119"/>
    </location>
</feature>
<feature type="helix" evidence="70">
    <location>
        <begin position="124"/>
        <end position="153"/>
    </location>
</feature>
<feature type="strand" evidence="70">
    <location>
        <begin position="154"/>
        <end position="158"/>
    </location>
</feature>
<feature type="helix" evidence="70">
    <location>
        <begin position="160"/>
        <end position="194"/>
    </location>
</feature>
<feature type="helix" evidence="70">
    <location>
        <begin position="204"/>
        <end position="235"/>
    </location>
</feature>
<feature type="strand" evidence="72">
    <location>
        <begin position="240"/>
        <end position="242"/>
    </location>
</feature>
<feature type="helix" evidence="70">
    <location>
        <begin position="244"/>
        <end position="250"/>
    </location>
</feature>
<feature type="turn" evidence="70">
    <location>
        <begin position="251"/>
        <end position="253"/>
    </location>
</feature>
<feature type="helix" evidence="70">
    <location>
        <begin position="256"/>
        <end position="267"/>
    </location>
</feature>
<feature type="helix" evidence="70">
    <location>
        <begin position="270"/>
        <end position="272"/>
    </location>
</feature>
<feature type="helix" evidence="70">
    <location>
        <begin position="274"/>
        <end position="296"/>
    </location>
</feature>
<accession>D6VTK4</accession>
<accession>P06842</accession>
<accession>Q70D63</accession>
<accession>Q70D65</accession>
<accession>Q70D69</accession>
<accession>Q70D73</accession>
<accession>Q70D74</accession>
<comment type="function">
    <text evidence="2 3 6 9 13 16 21 27 30 31 34 35 39 40 41 42 43 45 46 49 50 51 53 54 55">Fungal class D1 G-protein-coupled receptor that acts as an alpha-factor pheromone receptor performing pheromone-dependent signal transduction involved in cellular conjugation, mating projection assembly, and in cell fusion (PubMed:10744981, PubMed:11495900, PubMed:12427030, PubMed:2556384, PubMed:2839507, PubMed:2842059, PubMed:3023832, PubMed:3037311, PubMed:4595644, PubMed:6353246, PubMed:6360378, PubMed:6993497, PubMed:9286665, PubMed:9529386, PubMed:9742115, PubMed:9819407, PubMed:9824658). Following alpha-factor-binding, the signal is transmitted via a tripartite G protein consisting of alpha-, beta- and gamma-subunits (GAP1, STE4 and STE8 respectively) that prepares the cell for conjugation (PubMed:10866688, PubMed:11287148, PubMed:1330324, PubMed:1647971, PubMed:8132618, PubMed:8385135, PubMed:8692892). In the inactive state, the cytoplasmic end of transmembrane domain 7 (TMD7) is unstructured and packs between TMD1-6, blocking the G protein coupling site (PubMed:35296853). Agonist binding results in the outward movement of the extracellular ends of TMD6 and TMD7 by 6 Angstroms (PubMed:35296853). On the intracellular surface, the G protein coupling site is formed by a 20 Angstroms outward movement of the unstructured region in TMD7 that unblocks the site, and a 12 Angstroms inward movement of TMD6 (PubMed:35296853).</text>
</comment>
<comment type="subunit">
    <text evidence="2 4 12 23 28 32 36 37 38 39">Homodimer (PubMed:12194975, PubMed:16709573, PubMed:33268889, PubMed:34627767, PubMed:35296853). Might also for higher order homooligomers such as homotetramers (PubMed:10744981, PubMed:10982387, PubMed:12194975, PubMed:27993568, PubMed:34433281, PubMed:34627767). Oligomerization is mediated significantly by transmembrane domain 1 (TMD1), possibly in concert with the N-terminal extracellular domain and TMD2 (PubMed:35296853). Interaction with GPA1, its dedicated G-alpha protein (PubMed:28958779, PubMed:33268889).</text>
</comment>
<comment type="interaction">
    <interactant intactId="EBI-6323511">
        <id>D6VTK4</id>
    </interactant>
    <interactant intactId="EBI-18366">
        <id>P06783</id>
        <label>STE3</label>
    </interactant>
    <organismsDiffer>false</organismsDiffer>
    <experiments>2</experiments>
</comment>
<comment type="subcellular location">
    <subcellularLocation>
        <location evidence="16 17 18 25 29 30 38 39 44">Cell membrane</location>
        <topology evidence="5 7 8 22 24 25 39">Multi-pass membrane protein</topology>
    </subcellularLocation>
    <text evidence="16 33 44 47">Internalized after binding of alpha-factor (PubMed:8392878). STE2 enters the cell by receptor-mediated endocytosis and is continuously lost and resynthesized in the presence of alpha-factor (PubMed:1330324, PubMed:3015412, PubMed:7935439, PubMed:8392878).</text>
</comment>
<comment type="tissue specificity">
    <text evidence="20">Expressed in MATa strains but not in MATalpha strains.</text>
</comment>
<comment type="induction">
    <text evidence="14 20 26">Expression is induced by exogenous alpha-factor (PubMed:16453635). Expression is repressed by ITC1, a subunit of the ISW2 chromatin remodeling complex (PubMed:12624196, PubMed:21969566).</text>
</comment>
<comment type="domain">
    <text evidence="12 17 23 36">The extracellular N-terminal domain and transmembrane domains 1 and 2 mediate homooligomerization (PubMed:12194975). The highly conserved sequence IXXGXXXGA (residues 53-61) is a glycine zipper motif in which shallow grooves in the alpha-helices interact with one another (PubMed:14506226, PubMed:16709573, PubMed:33268889).</text>
</comment>
<comment type="domain">
    <text evidence="39">The transmembrane domain 1 (TMD1) and TMD2 mediate oligomerization by providing a homophilic interaction surface that stabilizes dimers/oligomers.</text>
</comment>
<comment type="domain">
    <text evidence="45">The third intracellular loop (residues 231-243) is essential for signal transduction.</text>
</comment>
<comment type="domain">
    <text evidence="47">The DAKSS motif (residues 335-339) is required for internalization of STE2 in response to alpha-factor-binding.</text>
</comment>
<comment type="domain">
    <text evidence="11 54">The region from residue 251 to 294 which encompasses transmembrane domain 6 (TMD6), the extracellular loop between TMD6 and TMD7, and TMD7, is involved in the binding of alpha-factor (PubMed:11994008). Polar residues in TMD6 such as Gln-253 or Ser-254 influence receptor structure by forming intramolecular contacts between TMD6 and the neighbor TMDs (PubMed:9819407).</text>
</comment>
<comment type="domain">
    <text evidence="3 6 22 31 32 48">The C-terminal cytoplasmic domain is highly phosphorylated and involved in regulation of the pheromone response via promoting the formation of receptor-G-protein preactivation complexes (PubMed:10866688, PubMed:11287148, PubMed:1653030, PubMed:2842059, PubMed:8524302). This domain is in particular involved in the interaction with the G-alpha subunit GPA1 (PubMed:28958779).</text>
</comment>
<comment type="domain">
    <text evidence="23">STE2 has an extensive orthosteric binding pocket that involves residues throughout the extracellular half of the receptor.</text>
</comment>
<comment type="PTM">
    <text evidence="16 48">Undergoes hyperphosphorylation of the C-terminal cytoplasmic domain after binding of the alpha-factor, which leads to internalization by endocytosis.</text>
</comment>
<comment type="PTM">
    <text evidence="52">Monoubiquitination at Lys-337 triggers internalization of STE2.</text>
</comment>
<comment type="PTM">
    <text evidence="10 30">N-glycosylated (PubMed:11583169, PubMed:2839507). N-glycosylation may be involved in the sorting process for misfolded STE2 protein (PubMed:11583169).</text>
</comment>
<comment type="disruption phenotype">
    <text evidence="15">Strongly affects mating efficiency.</text>
</comment>
<comment type="similarity">
    <text evidence="56">Belongs to the G-protein coupled receptor 4 family.</text>
</comment>
<gene>
    <name type="primary">STE2</name>
    <name type="ordered locus">YFL026W</name>
</gene>
<name>STE2_YEAST</name>
<protein>
    <recommendedName>
        <fullName>Pheromone alpha factor receptor</fullName>
    </recommendedName>
</protein>
<dbReference type="EMBL" id="X03010">
    <property type="protein sequence ID" value="CAA26794.1"/>
    <property type="molecule type" value="Genomic_DNA"/>
</dbReference>
<dbReference type="EMBL" id="M24335">
    <property type="protein sequence ID" value="AAA35112.1"/>
    <property type="molecule type" value="Genomic_DNA"/>
</dbReference>
<dbReference type="EMBL" id="AJ585736">
    <property type="protein sequence ID" value="CAE52256.1"/>
    <property type="molecule type" value="Genomic_DNA"/>
</dbReference>
<dbReference type="EMBL" id="D50617">
    <property type="protein sequence ID" value="BAA09212.1"/>
    <property type="molecule type" value="Genomic_DNA"/>
</dbReference>
<dbReference type="EMBL" id="AY693134">
    <property type="protein sequence ID" value="AAT93153.1"/>
    <property type="molecule type" value="Genomic_DNA"/>
</dbReference>
<dbReference type="EMBL" id="BK006940">
    <property type="protein sequence ID" value="DAA12414.2"/>
    <property type="molecule type" value="Genomic_DNA"/>
</dbReference>
<dbReference type="PIR" id="S56228">
    <property type="entry name" value="S56228"/>
</dbReference>
<dbReference type="RefSeq" id="NP_116627.2">
    <property type="nucleotide sequence ID" value="NM_001179940.2"/>
</dbReference>
<dbReference type="PDB" id="1PJD">
    <property type="method" value="NMR"/>
    <property type="chains" value="A=253-269"/>
</dbReference>
<dbReference type="PDB" id="2K9P">
    <property type="method" value="NMR"/>
    <property type="chains" value="A=31-110"/>
</dbReference>
<dbReference type="PDB" id="7AD3">
    <property type="method" value="EM"/>
    <property type="resolution" value="3.30 A"/>
    <property type="chains" value="A/B=9-306"/>
</dbReference>
<dbReference type="PDB" id="7QA8">
    <property type="method" value="EM"/>
    <property type="resolution" value="2.70 A"/>
    <property type="chains" value="A/B=1-431"/>
</dbReference>
<dbReference type="PDB" id="7QB9">
    <property type="method" value="EM"/>
    <property type="resolution" value="3.10 A"/>
    <property type="chains" value="A/B=1-431"/>
</dbReference>
<dbReference type="PDB" id="7QBC">
    <property type="method" value="EM"/>
    <property type="resolution" value="3.53 A"/>
    <property type="chains" value="A/B=1-431"/>
</dbReference>
<dbReference type="PDB" id="7QBI">
    <property type="method" value="EM"/>
    <property type="resolution" value="3.46 A"/>
    <property type="chains" value="A/B=1-431"/>
</dbReference>
<dbReference type="PDBsum" id="1PJD"/>
<dbReference type="PDBsum" id="2K9P"/>
<dbReference type="PDBsum" id="7AD3"/>
<dbReference type="PDBsum" id="7QA8"/>
<dbReference type="PDBsum" id="7QB9"/>
<dbReference type="PDBsum" id="7QBC"/>
<dbReference type="PDBsum" id="7QBI"/>
<dbReference type="BMRB" id="D6VTK4"/>
<dbReference type="EMDB" id="EMD-13886"/>
<dbReference type="EMDB" id="EMD-13887"/>
<dbReference type="SMR" id="D6VTK4"/>
<dbReference type="BioGRID" id="31120">
    <property type="interactions" value="111"/>
</dbReference>
<dbReference type="FunCoup" id="D6VTK4">
    <property type="interactions" value="204"/>
</dbReference>
<dbReference type="IntAct" id="D6VTK4">
    <property type="interactions" value="6"/>
</dbReference>
<dbReference type="MINT" id="D6VTK4"/>
<dbReference type="STRING" id="4932.YFL026W"/>
<dbReference type="TCDB" id="9.B.45.1.1">
    <property type="family name" value="the fungal mating-type pheromone receptor (mat-pr) family"/>
</dbReference>
<dbReference type="GlyCosmos" id="D6VTK4">
    <property type="glycosylation" value="2 sites, No reported glycans"/>
</dbReference>
<dbReference type="GlyGen" id="D6VTK4">
    <property type="glycosylation" value="2 sites"/>
</dbReference>
<dbReference type="iPTMnet" id="D6VTK4"/>
<dbReference type="PaxDb" id="4932-YFL026W"/>
<dbReference type="PeptideAtlas" id="D6VTK4"/>
<dbReference type="EnsemblFungi" id="YFL026W_mRNA">
    <property type="protein sequence ID" value="YFL026W"/>
    <property type="gene ID" value="YFL026W"/>
</dbReference>
<dbReference type="GeneID" id="850518"/>
<dbReference type="KEGG" id="sce:YFL026W"/>
<dbReference type="AGR" id="SGD:S000001868"/>
<dbReference type="SGD" id="S000001868">
    <property type="gene designation" value="STE2"/>
</dbReference>
<dbReference type="VEuPathDB" id="FungiDB:YFL026W"/>
<dbReference type="eggNOG" id="ENOG502QTV4">
    <property type="taxonomic scope" value="Eukaryota"/>
</dbReference>
<dbReference type="HOGENOM" id="CLU_038593_1_0_1"/>
<dbReference type="InParanoid" id="D6VTK4"/>
<dbReference type="OMA" id="VSICYFS"/>
<dbReference type="OrthoDB" id="5402633at2759"/>
<dbReference type="BioCyc" id="YEAST:G3O-30434-MONOMER"/>
<dbReference type="BioGRID-ORCS" id="850518">
    <property type="hits" value="0 hits in 10 CRISPR screens"/>
</dbReference>
<dbReference type="EvolutionaryTrace" id="D6VTK4"/>
<dbReference type="PRO" id="PR:D6VTK4"/>
<dbReference type="Proteomes" id="UP000002311">
    <property type="component" value="Chromosome VI"/>
</dbReference>
<dbReference type="RNAct" id="D6VTK4">
    <property type="molecule type" value="protein"/>
</dbReference>
<dbReference type="GO" id="GO:0038038">
    <property type="term" value="C:G protein-coupled receptor homodimeric complex"/>
    <property type="evidence" value="ECO:0000318"/>
    <property type="project" value="GO_Central"/>
</dbReference>
<dbReference type="GO" id="GO:0005886">
    <property type="term" value="C:plasma membrane"/>
    <property type="evidence" value="ECO:0000314"/>
    <property type="project" value="SGD"/>
</dbReference>
<dbReference type="GO" id="GO:0004934">
    <property type="term" value="F:mating-type alpha-factor pheromone receptor activity"/>
    <property type="evidence" value="ECO:0000314"/>
    <property type="project" value="SGD"/>
</dbReference>
<dbReference type="GO" id="GO:0004932">
    <property type="term" value="F:mating-type factor pheromone receptor activity"/>
    <property type="evidence" value="ECO:0000318"/>
    <property type="project" value="GO_Central"/>
</dbReference>
<dbReference type="GO" id="GO:0000755">
    <property type="term" value="P:cytogamy"/>
    <property type="evidence" value="ECO:0000314"/>
    <property type="project" value="SGD"/>
</dbReference>
<dbReference type="GO" id="GO:0000750">
    <property type="term" value="P:pheromone-dependent signal transduction involved in conjugation with cellular fusion"/>
    <property type="evidence" value="ECO:0000315"/>
    <property type="project" value="SGD"/>
</dbReference>
<dbReference type="CDD" id="cd14939">
    <property type="entry name" value="7tmD_STE2"/>
    <property type="match status" value="1"/>
</dbReference>
<dbReference type="Gene3D" id="1.10.287.920">
    <property type="entry name" value="Pheromone alpha factor receptor"/>
    <property type="match status" value="1"/>
</dbReference>
<dbReference type="InterPro" id="IPR000366">
    <property type="entry name" value="GPCR_STE2"/>
</dbReference>
<dbReference type="InterPro" id="IPR027458">
    <property type="entry name" value="STE2_TM1-TM2_sf"/>
</dbReference>
<dbReference type="PANTHER" id="PTHR28009">
    <property type="entry name" value="PHEROMONE ALPHA FACTOR RECEPTOR"/>
    <property type="match status" value="1"/>
</dbReference>
<dbReference type="PANTHER" id="PTHR28009:SF1">
    <property type="entry name" value="PHEROMONE ALPHA FACTOR RECEPTOR"/>
    <property type="match status" value="1"/>
</dbReference>
<dbReference type="Pfam" id="PF02116">
    <property type="entry name" value="STE2"/>
    <property type="match status" value="1"/>
</dbReference>
<dbReference type="PRINTS" id="PR00250">
    <property type="entry name" value="GPCRSTE2"/>
</dbReference>
<reference key="1">
    <citation type="journal article" date="1985" name="EMBO J.">
        <title>Nucleotide sequences of STE2 and STE3, cell type-specific sterile genes from Saccharomyces cerevisiae.</title>
        <authorList>
            <person name="Nakayama N."/>
            <person name="Miyajima A."/>
            <person name="Arai K."/>
        </authorList>
    </citation>
    <scope>NUCLEOTIDE SEQUENCE [GENOMIC DNA]</scope>
    <scope>TISSUE SPECIFICITY</scope>
    <scope>INDUCTION</scope>
    <source>
        <strain>ATCC 204660 / DBY746</strain>
    </source>
</reference>
<reference key="2">
    <citation type="journal article" date="1985" name="Nucleic Acids Res.">
        <title>The yeast alpha-factor receptor: structural properties deduced from the sequence of the STE2 gene.</title>
        <authorList>
            <person name="Burkholder A.C."/>
            <person name="Hartwell L.H."/>
        </authorList>
    </citation>
    <scope>NUCLEOTIDE SEQUENCE [GENOMIC DNA]</scope>
</reference>
<reference key="3">
    <citation type="journal article" date="2004" name="Nucleic Acids Res.">
        <title>Differential evolution of the Saccharomyces cerevisiae DUP240 paralogs and implication of recombination in phylogeny.</title>
        <authorList>
            <person name="Leh-Louis V."/>
            <person name="Wirth B."/>
            <person name="Despons L."/>
            <person name="Wain-Hobson S."/>
            <person name="Potier S."/>
            <person name="Souciet J.-L."/>
        </authorList>
    </citation>
    <scope>NUCLEOTIDE SEQUENCE [GENOMIC DNA]</scope>
    <source>
        <strain>ATCC 204508 / S288c</strain>
    </source>
</reference>
<reference key="4">
    <citation type="journal article" date="1995" name="Nat. Genet.">
        <title>Analysis of the nucleotide sequence of chromosome VI from Saccharomyces cerevisiae.</title>
        <authorList>
            <person name="Murakami Y."/>
            <person name="Naitou M."/>
            <person name="Hagiwara H."/>
            <person name="Shibata T."/>
            <person name="Ozawa M."/>
            <person name="Sasanuma S."/>
            <person name="Sasanuma M."/>
            <person name="Tsuchiya Y."/>
            <person name="Soeda E."/>
            <person name="Yokoyama K."/>
            <person name="Yamazaki M."/>
            <person name="Tashiro H."/>
            <person name="Eki T."/>
        </authorList>
    </citation>
    <scope>NUCLEOTIDE SEQUENCE [LARGE SCALE GENOMIC DNA]</scope>
    <source>
        <strain>ATCC 204508 / S288c</strain>
    </source>
</reference>
<reference key="5">
    <citation type="journal article" date="2014" name="G3 (Bethesda)">
        <title>The reference genome sequence of Saccharomyces cerevisiae: Then and now.</title>
        <authorList>
            <person name="Engel S.R."/>
            <person name="Dietrich F.S."/>
            <person name="Fisk D.G."/>
            <person name="Binkley G."/>
            <person name="Balakrishnan R."/>
            <person name="Costanzo M.C."/>
            <person name="Dwight S.S."/>
            <person name="Hitz B.C."/>
            <person name="Karra K."/>
            <person name="Nash R.S."/>
            <person name="Weng S."/>
            <person name="Wong E.D."/>
            <person name="Lloyd P."/>
            <person name="Skrzypek M.S."/>
            <person name="Miyasato S.R."/>
            <person name="Simison M."/>
            <person name="Cherry J.M."/>
        </authorList>
    </citation>
    <scope>GENOME REANNOTATION</scope>
    <scope>SEQUENCE REVISION TO 269</scope>
    <source>
        <strain>ATCC 204508 / S288c</strain>
    </source>
</reference>
<reference key="6">
    <citation type="journal article" date="2007" name="Genome Res.">
        <title>Approaching a complete repository of sequence-verified protein-encoding clones for Saccharomyces cerevisiae.</title>
        <authorList>
            <person name="Hu Y."/>
            <person name="Rolfs A."/>
            <person name="Bhullar B."/>
            <person name="Murthy T.V.S."/>
            <person name="Zhu C."/>
            <person name="Berger M.F."/>
            <person name="Camargo A.A."/>
            <person name="Kelley F."/>
            <person name="McCarron S."/>
            <person name="Jepson D."/>
            <person name="Richardson A."/>
            <person name="Raphael J."/>
            <person name="Moreira D."/>
            <person name="Taycher E."/>
            <person name="Zuo D."/>
            <person name="Mohr S."/>
            <person name="Kane M.F."/>
            <person name="Williamson J."/>
            <person name="Simpson A.J.G."/>
            <person name="Bulyk M.L."/>
            <person name="Harlow E."/>
            <person name="Marsischky G."/>
            <person name="Kolodner R.D."/>
            <person name="LaBaer J."/>
        </authorList>
    </citation>
    <scope>NUCLEOTIDE SEQUENCE [GENOMIC DNA]</scope>
    <source>
        <strain>ATCC 204508 / S288c</strain>
    </source>
</reference>
<reference key="7">
    <citation type="journal article" date="1974" name="Genetics">
        <title>Mutations affecting sexual conjugation and related processes in Saccharomyces cerevisiae. II. Genetic analysis of nonmating mutants.</title>
        <authorList>
            <person name="Mackay V."/>
            <person name="Manney T.R."/>
        </authorList>
    </citation>
    <scope>FUNCTION</scope>
</reference>
<reference key="8">
    <citation type="journal article" date="1980" name="J. Cell Biol.">
        <title>Mutants of Saccharomyces cerevisiae unresponsive to cell division control by polypeptide mating hormone.</title>
        <authorList>
            <person name="Hartwell L.H."/>
        </authorList>
    </citation>
    <scope>FUNCTION</scope>
</reference>
<reference key="9">
    <citation type="journal article" date="1983" name="Nature">
        <title>Induction of yeast mating pheromone a-factor by alpha cells.</title>
        <authorList>
            <person name="Strazdis J.R."/>
            <person name="MacKay V.L."/>
        </authorList>
    </citation>
    <scope>FUNCTION</scope>
</reference>
<reference key="10">
    <citation type="journal article" date="1983" name="Cell">
        <title>Binding of alpha-factor pheromone to yeast a cells: chemical and genetic evidence for an alpha-factor receptor.</title>
        <authorList>
            <person name="Jenness D.D."/>
            <person name="Burkholder A.C."/>
            <person name="Hartwell L.H."/>
        </authorList>
    </citation>
    <scope>FUNCTION</scope>
</reference>
<reference key="11">
    <citation type="journal article" date="1986" name="Cell">
        <title>Down regulation of the alpha-factor pheromone receptor in S. cerevisiae.</title>
        <authorList>
            <person name="Jenness D.D."/>
            <person name="Spatrick P."/>
        </authorList>
    </citation>
    <scope>PROTEIN TURNOVER</scope>
</reference>
<reference key="12">
    <citation type="journal article" date="1986" name="Mol. Cell. Biol.">
        <title>Binding of alpha-factor pheromone to Saccharomyces cerevisiae a cells: dissociation constant and number of binding sites.</title>
        <authorList>
            <person name="Jenness D.D."/>
            <person name="Burkholder A.C."/>
            <person name="Hartwell L.H."/>
        </authorList>
    </citation>
    <scope>FUNCTION</scope>
    <scope>ALPHA-FACTOR-BINDING</scope>
</reference>
<reference key="13">
    <citation type="journal article" date="1987" name="Mol. Cell. Biol.">
        <title>Saccharomyces cerevisiae mutants unresponsive to alpha-factor pheromone: alpha-factor binding and extragenic suppression.</title>
        <authorList>
            <person name="Jenness D.D."/>
            <person name="Goldman B.S."/>
            <person name="Hartwell L.H."/>
        </authorList>
    </citation>
    <scope>FUNCTION</scope>
</reference>
<reference key="14">
    <citation type="journal article" date="1988" name="Cell">
        <title>The C-terminus of the S. cerevisiae alpha-pheromone receptor mediates an adaptive response to pheromone.</title>
        <authorList>
            <person name="Konopka J.B."/>
            <person name="Jenness D.D."/>
            <person name="Hartwell L.H."/>
        </authorList>
    </citation>
    <scope>FUNCTION</scope>
    <scope>DOMAIN</scope>
</reference>
<reference key="15">
    <citation type="journal article" date="1988" name="J. Biol. Chem.">
        <title>The STE2 gene product is the ligand-binding component of the alpha-factor receptor of Saccharomyces cerevisiae.</title>
        <authorList>
            <person name="Blumer K.J."/>
            <person name="Reneke J.E."/>
            <person name="Thorner J."/>
        </authorList>
    </citation>
    <scope>FUNCTION</scope>
    <scope>SUBCELLULAR LOCATION</scope>
    <scope>GLYCOSYLATION</scope>
</reference>
<reference key="16">
    <citation type="journal article" date="1989" name="J. Biol. Chem.">
        <title>Functional expression of the yeast alpha-factor receptor in Xenopus oocytes.</title>
        <authorList>
            <person name="Yu L."/>
            <person name="Blumer K.J."/>
            <person name="Davidson N."/>
            <person name="Lester H.A."/>
            <person name="Thorner J."/>
        </authorList>
    </citation>
    <scope>FUNCTION</scope>
    <scope>ALPHA-FACTOR-BINDING</scope>
</reference>
<reference key="17">
    <citation type="journal article" date="1991" name="Cell Regul.">
        <title>Genetic fine-structural analysis of the Saccharomyces cerevisiae alpha-pheromone receptor.</title>
        <authorList>
            <person name="Konopka J.B."/>
            <person name="Jenness D.D."/>
        </authorList>
    </citation>
    <scope>FUNCTION</scope>
    <scope>DOMAIN</scope>
    <scope>TOPOLOGY</scope>
</reference>
<reference key="18">
    <citation type="journal article" date="1991" name="FEBS Lett.">
        <title>Yeast alpha-mating factor receptor-linked G-protein signal transduction suppresses Ras-dependent activity.</title>
        <authorList>
            <person name="Arkinstall S.J."/>
            <person name="Papasavvas S.G."/>
            <person name="Payton M.A."/>
        </authorList>
    </citation>
    <scope>FUNCTION</scope>
</reference>
<reference key="19">
    <citation type="journal article" date="1991" name="Mol. Cell. Biol.">
        <title>In vivo topological analysis of Ste2, a yeast plasma membrane protein, by using beta-lactamase gene fusions.</title>
        <authorList>
            <person name="Cartwright C.P."/>
            <person name="Tipper D.J."/>
        </authorList>
    </citation>
    <scope>SUBCELLULAR LOCATION</scope>
    <scope>TOPOLOGY</scope>
</reference>
<reference key="20">
    <citation type="journal article" date="1992" name="Cell">
        <title>Yeast pheromone receptor endocytosis and hyperphosphorylation are independent of G protein-mediated signal transduction.</title>
        <authorList>
            <person name="Zanolari B."/>
            <person name="Raths S."/>
            <person name="Singer-Krueger B."/>
            <person name="Riezman H."/>
        </authorList>
    </citation>
    <scope>FUNCTION</scope>
    <scope>SUBCELLULAR LOCATION</scope>
    <scope>TURNOVER</scope>
    <scope>PHOSPHORYLATION</scope>
</reference>
<reference key="21">
    <citation type="journal article" date="1992" name="Genetics">
        <title>Disruption of a silencer domain by a retrotransposon.</title>
        <authorList>
            <person name="Mastrangelo M.F."/>
            <person name="Weinstock K.G."/>
            <person name="Shafer B.K."/>
            <person name="Hedge A.M."/>
            <person name="Garfinkel D.J."/>
            <person name="Strathern J.N."/>
        </authorList>
    </citation>
    <scope>DISRUPTION PHENOTYPE</scope>
</reference>
<reference key="22">
    <citation type="journal article" date="1993" name="J. Biol. Chem.">
        <title>Disruption of receptor-G protein coupling in yeast promotes the function of an SST2-dependent adaptation pathway.</title>
        <authorList>
            <person name="Weiner J.L."/>
            <person name="Guttierez-Steil C."/>
            <person name="Blumer K.J."/>
        </authorList>
    </citation>
    <scope>FUNCTION</scope>
    <scope>MUTAGENESIS OF ARG-233; ARG-234 AND LEU-236</scope>
</reference>
<reference key="23">
    <citation type="journal article" date="1993" name="Mol. Biol. Cell">
        <title>Identification of a novel sequence mediating regulated endocytosis of the G protein-coupled alpha-pheromone receptor in yeast.</title>
        <authorList>
            <person name="Rohrer J."/>
            <person name="Benedetti H."/>
            <person name="Zanolari B."/>
            <person name="Riezman H."/>
        </authorList>
    </citation>
    <scope>FUNCTION</scope>
    <scope>TURNOVER</scope>
    <scope>DOMAIN</scope>
    <scope>MUTAGENESIS OF ASP-335; LYS-337 AND 338-SER-SER-339</scope>
</reference>
<reference key="24">
    <citation type="journal article" date="1994" name="J. Biol. Chem.">
        <title>Systematic mutagenesis of the yeast mating pheromone receptor third intracellular loop.</title>
        <authorList>
            <person name="Clark C.D."/>
            <person name="Palzkill T."/>
            <person name="Botstein D."/>
        </authorList>
    </citation>
    <scope>FUNCTION</scope>
    <scope>DOMAIN</scope>
    <scope>MUTAGENESIS OF ARG-233; GLY-237; GLN-240 AND PHE-241</scope>
</reference>
<reference key="25">
    <citation type="journal article" date="1994" name="Mol. Cell. Biol.">
        <title>The third cytoplasmic loop of a yeast G-protein-coupled receptor controls pathway activation, ligand discrimination, and receptor internalization.</title>
        <authorList>
            <person name="Stefan C.J."/>
            <person name="Blumer K.J."/>
        </authorList>
    </citation>
    <scope>FUNCTION</scope>
    <scope>SUBCELLULAR LOCATION</scope>
    <scope>TOPOLOGY</scope>
    <scope>DOMAIN</scope>
</reference>
<reference key="26">
    <citation type="journal article" date="1994" name="Mol. Cell. Biol.">
        <title>Direct evidence for ligand-induced internalization of the yeast alpha-factor pheromone receptor.</title>
        <authorList>
            <person name="Schandel K.A."/>
            <person name="Jenness D.D."/>
        </authorList>
    </citation>
    <scope>SUBCELLULAR LOCATION</scope>
    <scope>TURNOVER</scope>
</reference>
<reference key="27">
    <citation type="journal article" date="1996" name="Mol. Cell. Biol.">
        <title>Regulation of the G-protein-coupled alpha-factor pheromone receptor by phosphorylation.</title>
        <authorList>
            <person name="Chen Q."/>
            <person name="Konopka J.B."/>
        </authorList>
    </citation>
    <scope>PHOSPHORYLATION</scope>
    <scope>DOMAIN</scope>
</reference>
<reference key="28">
    <citation type="journal article" date="1996" name="Proc. Natl. Acad. Sci. U.S.A.">
        <title>Mutation of Pro-258 in transmembrane domain 6 constitutively activates the G protein-coupled alpha-factor receptor.</title>
        <authorList>
            <person name="Konopka J.B."/>
            <person name="Margarit S.M."/>
            <person name="Dube P."/>
        </authorList>
    </citation>
    <scope>FUNCTION</scope>
    <scope>MUTAGENESIS OF PRO-258 AND SER-259</scope>
</reference>
<reference key="29">
    <citation type="journal article" date="1997" name="Genetics">
        <title>Mating in Saccharomyces cerevisiae: the role of the pheromone signal transduction pathway in the chemotropic response to pheromone.</title>
        <authorList>
            <person name="Schrick K."/>
            <person name="Garvik B."/>
            <person name="Hartwell L.H."/>
        </authorList>
    </citation>
    <scope>FUNCTION</scope>
</reference>
<reference key="30">
    <citation type="journal article" date="1998" name="Biochim. Biophys. Acta">
        <title>Mutations affecting ligand specificity of the G-protein-coupled receptor for the Saccharomyces cerevisiae tridecapeptide pheromone.</title>
        <authorList>
            <person name="Abel M.G."/>
            <person name="Lee B.K."/>
            <person name="Naider F."/>
            <person name="Becker J.M."/>
        </authorList>
    </citation>
    <scope>FUNCTION</scope>
    <scope>MUTAGENESIS OF PHE-55 AND SER-219</scope>
</reference>
<reference key="31">
    <citation type="journal article" date="1998" name="Mol. Biol. Cell">
        <title>Mechanisms governing the activation and trafficking of yeast G protein-coupled receptors.</title>
        <authorList>
            <person name="Stefan C.J."/>
            <person name="Overton M.C."/>
            <person name="Blumer K.J."/>
        </authorList>
    </citation>
    <scope>FUNCTION</scope>
    <scope>MUTAGENESIS OF PRO-258</scope>
</reference>
<reference key="32">
    <citation type="journal article" date="1998" name="Mol. Cell">
        <title>A function for monoubiquitination in the internalization of a G protein-coupled receptor.</title>
        <authorList>
            <person name="Terrell J."/>
            <person name="Shih S."/>
            <person name="Dunn R."/>
            <person name="Hicke L."/>
        </authorList>
    </citation>
    <scope>MONOUBIQUITINATION AT LYS-337</scope>
</reference>
<reference key="33">
    <citation type="journal article" date="1998" name="Mol. Cell. Biol.">
        <title>Dominant-negative mutations in the G-protein-coupled alpha-factor receptor map to the extracellular ends of the transmembrane segments.</title>
        <authorList>
            <person name="Dosil M."/>
            <person name="Giot L."/>
            <person name="Davis C."/>
            <person name="Konopka J.B."/>
        </authorList>
    </citation>
    <scope>FUNCTION</scope>
    <scope>MUTAGENESIS OF ASN-132; SER-207; TYR-266 AND THR-274</scope>
</reference>
<reference key="34">
    <citation type="journal article" date="1998" name="Mol. Cell. Biol.">
        <title>Identification of a polar region in transmembrane domain 6 that regulates the function of the G protein-coupled alpha-factor receptor.</title>
        <authorList>
            <person name="Dube P."/>
            <person name="Konopka J.B."/>
        </authorList>
    </citation>
    <scope>FUNCTION</scope>
    <scope>DOMAIN</scope>
    <scope>MUTAGENESIS OF GLN-253 AND SER-254</scope>
</reference>
<reference key="35">
    <citation type="journal article" date="2000" name="Biochemistry">
        <title>Synthesis and biophysical analysis of transmembrane domains of a Saccharomyces cerevisiae G protein-coupled receptor.</title>
        <authorList>
            <person name="Xie H."/>
            <person name="Ding F.X."/>
            <person name="Schreiber D."/>
            <person name="Eng G."/>
            <person name="Liu S.F."/>
            <person name="Arshava B."/>
            <person name="Arevalo E."/>
            <person name="Becker J.M."/>
            <person name="Naider F."/>
        </authorList>
    </citation>
    <scope>TOPOLOGY</scope>
</reference>
<reference key="36">
    <citation type="journal article" date="2000" name="Curr. Biol.">
        <title>G-protein-coupled receptors function as oligomers in vivo.</title>
        <authorList>
            <person name="Overton M.C."/>
            <person name="Blumer K.J."/>
        </authorList>
    </citation>
    <scope>FUNCTION</scope>
    <scope>SUBUNIT</scope>
</reference>
<reference key="37">
    <citation type="journal article" date="2000" name="Mol. Biol. Cell">
        <title>Homo-oligomeric complexes of the yeast alpha-factor pheromone receptor are functional units of endocytosis.</title>
        <authorList>
            <person name="Yesilaltay A."/>
            <person name="Jenness D.D."/>
        </authorList>
    </citation>
    <scope>SUBUNIT</scope>
    <scope>TURNOVER</scope>
</reference>
<reference key="38">
    <citation type="journal article" date="2000" name="Mol. Cell. Biol.">
        <title>The C terminus of the Saccharomyces cerevisiae alpha-factor receptor contributes to the formation of preactivation complexes with its cognate G protein.</title>
        <authorList>
            <person name="Dosil M."/>
            <person name="Schandel K.A."/>
            <person name="Gupta E."/>
            <person name="Jenness D.D."/>
            <person name="Konopka J.B."/>
        </authorList>
    </citation>
    <scope>FUNCTION</scope>
    <scope>DOMAIN</scope>
</reference>
<reference key="39">
    <citation type="journal article" date="2001" name="Biochemistry">
        <title>ATR-FTIR study of the structure and orientation of transmembrane domains of the Saccharomyces cerevisiae alpha-mating factor receptor in phospholipids.</title>
        <authorList>
            <person name="Ding F.X."/>
            <person name="Xie H."/>
            <person name="Arshava B."/>
            <person name="Becker J.M."/>
            <person name="Naider F."/>
        </authorList>
    </citation>
    <scope>TOPOLOGY</scope>
</reference>
<reference key="40">
    <citation type="journal article" date="2001" name="Biochemistry">
        <title>Mutational analysis of the role of N-glycosylation in alpha-factor receptor function.</title>
        <authorList>
            <person name="Mentesana P.E."/>
            <person name="Konopka J.B."/>
        </authorList>
    </citation>
    <scope>GLYCOSYLATION AT ASN-25 AND ASN-32</scope>
</reference>
<reference key="41">
    <citation type="journal article" date="2001" name="FEMS Microbiol. Lett.">
        <title>The carboxy-terminal tail of the Ste2 receptor is involved in activation of the G protein in the Saccharomyces cerevisiae alpha-pheromone response pathway.</title>
        <authorList>
            <person name="Duran-Avelar M.J."/>
            <person name="Ongay-Larios L."/>
            <person name="Zentella-Dehesa A."/>
            <person name="Coria R."/>
        </authorList>
    </citation>
    <scope>FUNCTION</scope>
    <scope>DOMAIN</scope>
</reference>
<reference key="42">
    <citation type="journal article" date="2001" name="J. Biol. Chem.">
        <title>Identification of residues of the Saccharomyces cerevisiae G protein-coupled receptor contributing to alpha-factor pheromone binding.</title>
        <authorList>
            <person name="Lee B.K."/>
            <person name="Khare S."/>
            <person name="Naider F."/>
            <person name="Becker J.M."/>
        </authorList>
    </citation>
    <scope>FUNCTION</scope>
    <scope>MUTAGENESIS OF SER-47 AND THR-48</scope>
</reference>
<reference key="43">
    <citation type="journal article" date="2002" name="Biochemistry">
        <title>Identification of a contact region between the tridecapeptide alpha-factor mating pheromone of Saccharomyces cerevisiae and its G protein-coupled receptor by photoaffinity labeling.</title>
        <authorList>
            <person name="Henry L.K."/>
            <person name="Khare S."/>
            <person name="Son C."/>
            <person name="Babu V.V."/>
            <person name="Naider F."/>
            <person name="Becker J.M."/>
        </authorList>
    </citation>
    <scope>DOMAIN</scope>
</reference>
<reference key="44">
    <citation type="journal article" date="2002" name="Biochemistry">
        <title>Tyr266 in the sixth transmembrane domain of the yeast alpha-factor receptor plays key roles in receptor activation and ligand specificity.</title>
        <authorList>
            <person name="Lee B.K."/>
            <person name="Lee Y.H."/>
            <person name="Hauser M."/>
            <person name="Son C.D."/>
            <person name="Khare S."/>
            <person name="Naider F."/>
            <person name="Becker J.M."/>
        </authorList>
    </citation>
    <scope>FUNCTION</scope>
    <scope>MUTAGENESIS OF TYR-266</scope>
</reference>
<reference key="45">
    <citation type="journal article" date="2002" name="J. Biol. Chem.">
        <title>The extracellular N-terminal domain and transmembrane domains 1 and 2 mediate oligomerization of a yeast G protein-coupled receptor.</title>
        <authorList>
            <person name="Overton M.C."/>
            <person name="Blumer K.J."/>
        </authorList>
    </citation>
    <scope>DOMAIN</scope>
    <scope>SUBUNIT</scope>
</reference>
<reference key="46">
    <citation type="journal article" date="2003" name="J. Biol. Chem.">
        <title>Oligomerization, biogenesis, and signaling is promoted by a glycophorin A-like dimerization motif in transmembrane domain 1 of a yeast G protein-coupled receptor.</title>
        <authorList>
            <person name="Overton M.C."/>
            <person name="Chinault S.L."/>
            <person name="Blumer K.J."/>
        </authorList>
    </citation>
    <scope>SUBUNIT</scope>
    <scope>DOMAIN</scope>
    <scope>MUTAGENESIS OF GLY-56 AND GLY-60</scope>
    <scope>SUBCELLULAR LOCATION</scope>
</reference>
<reference key="47">
    <citation type="journal article" date="2003" name="Microbiology">
        <title>Cell-type-dependent repression of yeast a-specific genes requires Itc1p, a subunit of the Isw2p-Itc1p chromatin remodelling complex.</title>
        <authorList>
            <person name="Ruiz C."/>
            <person name="Escribano V."/>
            <person name="Morgado E."/>
            <person name="Molina M."/>
            <person name="Mazon M.J."/>
        </authorList>
    </citation>
    <scope>INDUCTION</scope>
</reference>
<reference key="48">
    <citation type="journal article" date="2005" name="Biochemistry">
        <title>Purification and characterization of a recombinant G-protein-coupled receptor, Saccharomyces cerevisiae Ste2p, transiently expressed in HEK293 EBNA1 cells.</title>
        <authorList>
            <person name="Shi C."/>
            <person name="Shin Y.O."/>
            <person name="Hanson J."/>
            <person name="Cass B."/>
            <person name="Loewen M.C."/>
            <person name="Durocher Y."/>
        </authorList>
    </citation>
    <scope>SUBCELLULAR LOCATION</scope>
</reference>
<reference key="49">
    <citation type="journal article" date="2005" name="Mol. Cell. Proteomics">
        <title>Quantitative phosphoproteomics applied to the yeast pheromone signaling pathway.</title>
        <authorList>
            <person name="Gruhler A."/>
            <person name="Olsen J.V."/>
            <person name="Mohammed S."/>
            <person name="Mortensen P."/>
            <person name="Faergeman N.J."/>
            <person name="Mann M."/>
            <person name="Jensen O.N."/>
        </authorList>
    </citation>
    <scope>PHOSPHORYLATION [LARGE SCALE ANALYSIS] AT SER-366</scope>
    <scope>IDENTIFICATION BY MASS SPECTROMETRY [LARGE SCALE ANALYSIS]</scope>
    <source>
        <strain>YAL6B</strain>
    </source>
</reference>
<reference key="50">
    <citation type="journal article" date="2006" name="J. Biol. Chem.">
        <title>Interacting residues in an activated state of a G protein-coupled receptor.</title>
        <authorList>
            <person name="Lee Y.H."/>
            <person name="Naider F."/>
            <person name="Becker J.M."/>
        </authorList>
    </citation>
    <scope>MUTAGENESIS OF PHE-204 AND ASN-205</scope>
    <scope>ALPHA-FACTOR-BINDING</scope>
</reference>
<reference key="51">
    <citation type="journal article" date="2006" name="J. Biol. Chem.">
        <title>Oligomerization of the yeast alpha-factor receptor: implications for dominant negative effects of mutant receptors.</title>
        <authorList>
            <person name="Gehret A.U."/>
            <person name="Bajaj A."/>
            <person name="Naider F."/>
            <person name="Dumont M.E."/>
        </authorList>
    </citation>
    <scope>SUBUNIT</scope>
    <scope>DOMAIN</scope>
    <scope>MUTAGENESIS OF GLY-56 AND GLY-60</scope>
</reference>
<reference key="52">
    <citation type="journal article" date="2007" name="J. Proteome Res.">
        <title>Large-scale phosphorylation analysis of alpha-factor-arrested Saccharomyces cerevisiae.</title>
        <authorList>
            <person name="Li X."/>
            <person name="Gerber S.A."/>
            <person name="Rudner A.D."/>
            <person name="Beausoleil S.A."/>
            <person name="Haas W."/>
            <person name="Villen J."/>
            <person name="Elias J.E."/>
            <person name="Gygi S.P."/>
        </authorList>
    </citation>
    <scope>PHOSPHORYLATION [LARGE SCALE ANALYSIS] AT SER-310; THR-329; SER-331; SER-360; THR-363; SER-366; THR-382; SER-385; SER-386; THR-411 AND THR-414</scope>
    <scope>IDENTIFICATION BY MASS SPECTROMETRY [LARGE SCALE ANALYSIS]</scope>
    <source>
        <strain>ADR376</strain>
    </source>
</reference>
<reference key="53">
    <citation type="journal article" date="2008" name="Mol. Cell. Proteomics">
        <title>A multidimensional chromatography technology for in-depth phosphoproteome analysis.</title>
        <authorList>
            <person name="Albuquerque C.P."/>
            <person name="Smolka M.B."/>
            <person name="Payne S.H."/>
            <person name="Bafna V."/>
            <person name="Eng J."/>
            <person name="Zhou H."/>
        </authorList>
    </citation>
    <scope>IDENTIFICATION BY MASS SPECTROMETRY [LARGE SCALE ANALYSIS]</scope>
</reference>
<reference key="54">
    <citation type="journal article" date="2009" name="Science">
        <title>Global analysis of Cdk1 substrate phosphorylation sites provides insights into evolution.</title>
        <authorList>
            <person name="Holt L.J."/>
            <person name="Tuch B.B."/>
            <person name="Villen J."/>
            <person name="Johnson A.D."/>
            <person name="Gygi S.P."/>
            <person name="Morgan D.O."/>
        </authorList>
    </citation>
    <scope>PHOSPHORYLATION [LARGE SCALE ANALYSIS] AT SER-315; THR-329; SER-331; SER-366; THR-382 AND SER-386</scope>
    <scope>IDENTIFICATION BY MASS SPECTROMETRY [LARGE SCALE ANALYSIS]</scope>
</reference>
<reference key="55">
    <citation type="journal article" date="2011" name="Proc. Natl. Acad. Sci. U.S.A.">
        <title>Yeast pheromone receptor genes STE2 and STE3 are differently regulated at the transcription and polyadenylation level.</title>
        <authorList>
            <person name="Di Segni G."/>
            <person name="Gastaldi S."/>
            <person name="Zamboni M."/>
            <person name="Tocchini-Valentini G.P."/>
        </authorList>
    </citation>
    <scope>INDUCTION</scope>
</reference>
<reference key="56">
    <citation type="journal article" date="2012" name="Proteomics">
        <title>Sites of ubiquitin attachment in Saccharomyces cerevisiae.</title>
        <authorList>
            <person name="Starita L.M."/>
            <person name="Lo R.S."/>
            <person name="Eng J.K."/>
            <person name="von Haller P.D."/>
            <person name="Fields S."/>
        </authorList>
    </citation>
    <scope>UBIQUITINATION [LARGE SCALE ANALYSIS] AT LYS-374; LYS-400 AND LYS-422</scope>
    <scope>IDENTIFICATION BY MASS SPECTROMETRY [LARGE SCALE ANALYSIS]</scope>
</reference>
<reference key="57">
    <citation type="journal article" date="2017" name="Biochim. Biophys. Acta">
        <title>Quaternary structure of the yeast pheromone receptor Ste2 in living cells.</title>
        <authorList>
            <person name="Stoneman M.R."/>
            <person name="Paprocki J.D."/>
            <person name="Biener G."/>
            <person name="Yokoi K."/>
            <person name="Shevade A."/>
            <person name="Kuchin S."/>
            <person name="Raicu V."/>
        </authorList>
    </citation>
    <scope>SUBUNIT</scope>
</reference>
<reference key="58">
    <citation type="journal article" date="2017" name="Biochim. Biophys. Acta">
        <title>The yeast Ste2p G protein-coupled receptor dimerizes on the cell plasma membrane.</title>
        <authorList>
            <person name="Cevheroglu O."/>
            <person name="Kumas G."/>
            <person name="Hauser M."/>
            <person name="Becker J.M."/>
            <person name="Son C.D."/>
        </authorList>
    </citation>
    <scope>SUBUNIT</scope>
    <scope>SUBCELLULAR LOCATION</scope>
</reference>
<reference key="59">
    <citation type="journal article" date="2017" name="Biochim. Biophys. Acta">
        <title>GPCR-Galpha protein precoupling: Interaction between Ste2p, a yeast GPCR, and Gpa1p, its Galpha protein, is formed before ligand binding via the Ste2p C-terminal domain and the Gpa1p N-terminal domain.</title>
        <authorList>
            <person name="Cevheroglu O."/>
            <person name="Becker J.M."/>
            <person name="Son C.D."/>
        </authorList>
    </citation>
    <scope>INTERACTION WITH GPA1</scope>
    <scope>DOMAIN</scope>
</reference>
<reference key="60">
    <citation type="journal article" date="2021" name="Biophys. J.">
        <title>Oligomerization of yeast alpha-factor receptor detected by fluorescent energy transfer between ligands.</title>
        <authorList>
            <person name="Connelly S.M."/>
            <person name="Sridharan R."/>
            <person name="Naider F."/>
            <person name="Dumont M.E."/>
        </authorList>
    </citation>
    <scope>SUBUNIT</scope>
    <scope>SUBCELLULAR LOCATION</scope>
</reference>
<reference key="61">
    <citation type="journal article" date="2021" name="J. Phys. Chem. B">
        <title>Ste2p Under the Microscope: the Investigation of Oligomeric States of a Yeast G Protein-Coupled Receptor.</title>
        <authorList>
            <person name="Cevheroglu O."/>
            <person name="Murat M."/>
            <person name="Mingu-Akmete S."/>
            <person name="Son C.D."/>
        </authorList>
    </citation>
    <scope>SUBUNIT</scope>
</reference>
<reference evidence="59" key="62">
    <citation type="journal article" date="2001" name="Biopolymers">
        <title>Structure and topology of a peptide segment of the 6th transmembrane domain of the Saccharomyces cerevisae alpha-factor receptor in phospholipid bilayers.</title>
        <authorList>
            <person name="Valentine K.G."/>
            <person name="Liu S.F."/>
            <person name="Marassi F.M."/>
            <person name="Veglia G."/>
            <person name="Opella S.J."/>
            <person name="Ding F.X."/>
            <person name="Wang S.H."/>
            <person name="Arshava B."/>
            <person name="Becker J.M."/>
            <person name="Naider F."/>
        </authorList>
    </citation>
    <scope>STRUCTURE BY NMR OF 252-269</scope>
    <scope>TOPOLOGY</scope>
</reference>
<reference evidence="60" key="63">
    <citation type="journal article" date="2009" name="Biophys. J.">
        <title>Structure of a double transmembrane fragment of a G-protein-coupled receptor in micelles.</title>
        <authorList>
            <person name="Neumoin A."/>
            <person name="Cohen L.S."/>
            <person name="Arshava B."/>
            <person name="Tantry S."/>
            <person name="Becker J.M."/>
            <person name="Zerbe O."/>
            <person name="Naider F."/>
        </authorList>
    </citation>
    <scope>STRUCTURE BY NMR OF 31-110</scope>
    <scope>TOPOLOGY</scope>
</reference>
<reference evidence="61" key="64">
    <citation type="journal article" date="2021" name="Nature">
        <title>Structure of the class D GPCR Ste2 dimer coupled to two G proteins.</title>
        <authorList>
            <person name="Velazhahan V."/>
            <person name="Ma N."/>
            <person name="Pandy-Szekeres G."/>
            <person name="Kooistra A.J."/>
            <person name="Lee Y."/>
            <person name="Gloriam D.E."/>
            <person name="Vaidehi N."/>
            <person name="Tate C.G."/>
        </authorList>
    </citation>
    <scope>STRUCTURE BY ELECTRON MICROSCOPY (3.30 ANGSTROMS) OF 9-306</scope>
    <scope>DOMAIN</scope>
    <scope>SUBUNIT</scope>
    <scope>INTERACTION WITH GPA1 AND ALPHA-FACTOR</scope>
</reference>
<reference evidence="62 63 64 65" key="65">
    <citation type="journal article" date="2022" name="Nature">
        <title>Activation mechanism of the class D fungal GPCR dimer Ste2.</title>
        <authorList>
            <person name="Velazhahan V."/>
            <person name="Ma N."/>
            <person name="Vaidehi N."/>
            <person name="Tate C.G."/>
        </authorList>
    </citation>
    <scope>STRUCTURE BY ELECTRON MICROSCOPY (2.70 ANGSTROMS)</scope>
    <scope>FUNCTION</scope>
    <scope>DOMAIN</scope>
    <scope>SUBUNIT</scope>
    <scope>TOPOLOGY</scope>
    <scope>SUBCELLULAR LOCATION</scope>
</reference>
<keyword id="KW-0002">3D-structure</keyword>
<keyword id="KW-1003">Cell membrane</keyword>
<keyword id="KW-0297">G-protein coupled receptor</keyword>
<keyword id="KW-0325">Glycoprotein</keyword>
<keyword id="KW-1017">Isopeptide bond</keyword>
<keyword id="KW-0472">Membrane</keyword>
<keyword id="KW-0589">Pheromone response</keyword>
<keyword id="KW-0597">Phosphoprotein</keyword>
<keyword id="KW-0675">Receptor</keyword>
<keyword id="KW-1185">Reference proteome</keyword>
<keyword id="KW-0807">Transducer</keyword>
<keyword id="KW-0812">Transmembrane</keyword>
<keyword id="KW-1133">Transmembrane helix</keyword>
<keyword id="KW-0832">Ubl conjugation</keyword>
<organism>
    <name type="scientific">Saccharomyces cerevisiae (strain ATCC 204508 / S288c)</name>
    <name type="common">Baker's yeast</name>
    <dbReference type="NCBI Taxonomy" id="559292"/>
    <lineage>
        <taxon>Eukaryota</taxon>
        <taxon>Fungi</taxon>
        <taxon>Dikarya</taxon>
        <taxon>Ascomycota</taxon>
        <taxon>Saccharomycotina</taxon>
        <taxon>Saccharomycetes</taxon>
        <taxon>Saccharomycetales</taxon>
        <taxon>Saccharomycetaceae</taxon>
        <taxon>Saccharomyces</taxon>
    </lineage>
</organism>